<gene>
    <name evidence="14 20" type="primary">CYP4F12</name>
    <name type="ORF">UNQ568/PRO1129</name>
</gene>
<accession>Q9HCS2</accession>
<accession>E7ET51</accession>
<accession>O60389</accession>
<accession>Q5JPJ7</accession>
<accession>Q9HCS1</accession>
<keyword id="KW-0025">Alternative splicing</keyword>
<keyword id="KW-0256">Endoplasmic reticulum</keyword>
<keyword id="KW-0276">Fatty acid metabolism</keyword>
<keyword id="KW-0349">Heme</keyword>
<keyword id="KW-0408">Iron</keyword>
<keyword id="KW-0443">Lipid metabolism</keyword>
<keyword id="KW-0472">Membrane</keyword>
<keyword id="KW-0479">Metal-binding</keyword>
<keyword id="KW-0492">Microsome</keyword>
<keyword id="KW-0503">Monooxygenase</keyword>
<keyword id="KW-0560">Oxidoreductase</keyword>
<keyword id="KW-1267">Proteomics identification</keyword>
<keyword id="KW-1185">Reference proteome</keyword>
<keyword id="KW-0812">Transmembrane</keyword>
<keyword id="KW-1133">Transmembrane helix</keyword>
<reference key="1">
    <citation type="journal article" date="2001" name="Biochem. Biophys. Res. Commun.">
        <title>cDNA cloning and expression of CYP4F12, a novel human cytochrome P450.</title>
        <authorList>
            <person name="Bylund J."/>
            <person name="Bylund M."/>
            <person name="Oliw E.H."/>
        </authorList>
    </citation>
    <scope>NUCLEOTIDE SEQUENCE [MRNA] (ISOFORM 1)</scope>
    <scope>TISSUE SPECIFICITY</scope>
    <scope>FUNCTION</scope>
    <scope>CATALYTIC ACTIVITY</scope>
    <scope>PATHWAY</scope>
    <scope>VARIANTS MET-16; ASP-76 AND GLY-522</scope>
    <source>
        <tissue>Liver</tissue>
    </source>
</reference>
<reference key="2">
    <citation type="journal article" date="2001" name="Biochem. Biophys. Res. Commun.">
        <title>cDNA cloning and expression of a novel cytochrome p450 (cyp4f12) from human small intestine.</title>
        <authorList>
            <person name="Hashizume T."/>
            <person name="Imaoka S."/>
            <person name="Hiroi T."/>
            <person name="Terauchi Y."/>
            <person name="Fujii T."/>
            <person name="Miyazaki H."/>
            <person name="Kamataki T."/>
            <person name="Funae Y."/>
        </authorList>
    </citation>
    <scope>NUCLEOTIDE SEQUENCE [MRNA] (ISOFORM 1)</scope>
    <scope>FUNCTION</scope>
    <scope>TISSUE SPECIFICITY</scope>
    <scope>CHARACTERIZATION</scope>
    <scope>VARIANTS LEU-13; MET-16; ASP-76 AND GLY-522</scope>
    <source>
        <tissue>Small intestine</tissue>
    </source>
</reference>
<reference key="3">
    <citation type="journal article" date="2003" name="Genome Res.">
        <title>The secreted protein discovery initiative (SPDI), a large-scale effort to identify novel human secreted and transmembrane proteins: a bioinformatics assessment.</title>
        <authorList>
            <person name="Clark H.F."/>
            <person name="Gurney A.L."/>
            <person name="Abaya E."/>
            <person name="Baker K."/>
            <person name="Baldwin D.T."/>
            <person name="Brush J."/>
            <person name="Chen J."/>
            <person name="Chow B."/>
            <person name="Chui C."/>
            <person name="Crowley C."/>
            <person name="Currell B."/>
            <person name="Deuel B."/>
            <person name="Dowd P."/>
            <person name="Eaton D."/>
            <person name="Foster J.S."/>
            <person name="Grimaldi C."/>
            <person name="Gu Q."/>
            <person name="Hass P.E."/>
            <person name="Heldens S."/>
            <person name="Huang A."/>
            <person name="Kim H.S."/>
            <person name="Klimowski L."/>
            <person name="Jin Y."/>
            <person name="Johnson S."/>
            <person name="Lee J."/>
            <person name="Lewis L."/>
            <person name="Liao D."/>
            <person name="Mark M.R."/>
            <person name="Robbie E."/>
            <person name="Sanchez C."/>
            <person name="Schoenfeld J."/>
            <person name="Seshagiri S."/>
            <person name="Simmons L."/>
            <person name="Singh J."/>
            <person name="Smith V."/>
            <person name="Stinson J."/>
            <person name="Vagts A."/>
            <person name="Vandlen R.L."/>
            <person name="Watanabe C."/>
            <person name="Wieand D."/>
            <person name="Woods K."/>
            <person name="Xie M.-H."/>
            <person name="Yansura D.G."/>
            <person name="Yi S."/>
            <person name="Yu G."/>
            <person name="Yuan J."/>
            <person name="Zhang M."/>
            <person name="Zhang Z."/>
            <person name="Goddard A.D."/>
            <person name="Wood W.I."/>
            <person name="Godowski P.J."/>
            <person name="Gray A.M."/>
        </authorList>
    </citation>
    <scope>NUCLEOTIDE SEQUENCE [LARGE SCALE MRNA] (ISOFORM 1)</scope>
    <scope>VARIANTS MET-16; ASP-76 AND GLY-522</scope>
</reference>
<reference key="4">
    <citation type="journal article" date="2005" name="DNA Res.">
        <title>Signal sequence and keyword trap in silico for selection of full-length human cDNAs encoding secretion or membrane proteins from oligo-capped cDNA libraries.</title>
        <authorList>
            <person name="Otsuki T."/>
            <person name="Ota T."/>
            <person name="Nishikawa T."/>
            <person name="Hayashi K."/>
            <person name="Suzuki Y."/>
            <person name="Yamamoto J."/>
            <person name="Wakamatsu A."/>
            <person name="Kimura K."/>
            <person name="Sakamoto K."/>
            <person name="Hatano N."/>
            <person name="Kawai Y."/>
            <person name="Ishii S."/>
            <person name="Saito K."/>
            <person name="Kojima S."/>
            <person name="Sugiyama T."/>
            <person name="Ono T."/>
            <person name="Okano K."/>
            <person name="Yoshikawa Y."/>
            <person name="Aotsuka S."/>
            <person name="Sasaki N."/>
            <person name="Hattori A."/>
            <person name="Okumura K."/>
            <person name="Nagai K."/>
            <person name="Sugano S."/>
            <person name="Isogai T."/>
        </authorList>
    </citation>
    <scope>NUCLEOTIDE SEQUENCE [LARGE SCALE MRNA] (ISOFORM 2)</scope>
    <scope>VARIANTS MET-16 AND ASP-76</scope>
    <source>
        <tissue>Placenta</tissue>
    </source>
</reference>
<reference key="5">
    <citation type="journal article" date="2007" name="BMC Genomics">
        <title>The full-ORF clone resource of the German cDNA consortium.</title>
        <authorList>
            <person name="Bechtel S."/>
            <person name="Rosenfelder H."/>
            <person name="Duda A."/>
            <person name="Schmidt C.P."/>
            <person name="Ernst U."/>
            <person name="Wellenreuther R."/>
            <person name="Mehrle A."/>
            <person name="Schuster C."/>
            <person name="Bahr A."/>
            <person name="Bloecker H."/>
            <person name="Heubner D."/>
            <person name="Hoerlein A."/>
            <person name="Michel G."/>
            <person name="Wedler H."/>
            <person name="Koehrer K."/>
            <person name="Ottenwaelder B."/>
            <person name="Poustka A."/>
            <person name="Wiemann S."/>
            <person name="Schupp I."/>
        </authorList>
    </citation>
    <scope>NUCLEOTIDE SEQUENCE [LARGE SCALE MRNA] (ISOFORM 2)</scope>
    <scope>VARIANTS MET-16 AND ASP-76</scope>
    <source>
        <tissue>Cervix</tissue>
    </source>
</reference>
<reference key="6">
    <citation type="journal article" date="2004" name="Nature">
        <title>The DNA sequence and biology of human chromosome 19.</title>
        <authorList>
            <person name="Grimwood J."/>
            <person name="Gordon L.A."/>
            <person name="Olsen A.S."/>
            <person name="Terry A."/>
            <person name="Schmutz J."/>
            <person name="Lamerdin J.E."/>
            <person name="Hellsten U."/>
            <person name="Goodstein D."/>
            <person name="Couronne O."/>
            <person name="Tran-Gyamfi M."/>
            <person name="Aerts A."/>
            <person name="Altherr M."/>
            <person name="Ashworth L."/>
            <person name="Bajorek E."/>
            <person name="Black S."/>
            <person name="Branscomb E."/>
            <person name="Caenepeel S."/>
            <person name="Carrano A.V."/>
            <person name="Caoile C."/>
            <person name="Chan Y.M."/>
            <person name="Christensen M."/>
            <person name="Cleland C.A."/>
            <person name="Copeland A."/>
            <person name="Dalin E."/>
            <person name="Dehal P."/>
            <person name="Denys M."/>
            <person name="Detter J.C."/>
            <person name="Escobar J."/>
            <person name="Flowers D."/>
            <person name="Fotopulos D."/>
            <person name="Garcia C."/>
            <person name="Georgescu A.M."/>
            <person name="Glavina T."/>
            <person name="Gomez M."/>
            <person name="Gonzales E."/>
            <person name="Groza M."/>
            <person name="Hammon N."/>
            <person name="Hawkins T."/>
            <person name="Haydu L."/>
            <person name="Ho I."/>
            <person name="Huang W."/>
            <person name="Israni S."/>
            <person name="Jett J."/>
            <person name="Kadner K."/>
            <person name="Kimball H."/>
            <person name="Kobayashi A."/>
            <person name="Larionov V."/>
            <person name="Leem S.-H."/>
            <person name="Lopez F."/>
            <person name="Lou Y."/>
            <person name="Lowry S."/>
            <person name="Malfatti S."/>
            <person name="Martinez D."/>
            <person name="McCready P.M."/>
            <person name="Medina C."/>
            <person name="Morgan J."/>
            <person name="Nelson K."/>
            <person name="Nolan M."/>
            <person name="Ovcharenko I."/>
            <person name="Pitluck S."/>
            <person name="Pollard M."/>
            <person name="Popkie A.P."/>
            <person name="Predki P."/>
            <person name="Quan G."/>
            <person name="Ramirez L."/>
            <person name="Rash S."/>
            <person name="Retterer J."/>
            <person name="Rodriguez A."/>
            <person name="Rogers S."/>
            <person name="Salamov A."/>
            <person name="Salazar A."/>
            <person name="She X."/>
            <person name="Smith D."/>
            <person name="Slezak T."/>
            <person name="Solovyev V."/>
            <person name="Thayer N."/>
            <person name="Tice H."/>
            <person name="Tsai M."/>
            <person name="Ustaszewska A."/>
            <person name="Vo N."/>
            <person name="Wagner M."/>
            <person name="Wheeler J."/>
            <person name="Wu K."/>
            <person name="Xie G."/>
            <person name="Yang J."/>
            <person name="Dubchak I."/>
            <person name="Furey T.S."/>
            <person name="DeJong P."/>
            <person name="Dickson M."/>
            <person name="Gordon D."/>
            <person name="Eichler E.E."/>
            <person name="Pennacchio L.A."/>
            <person name="Richardson P."/>
            <person name="Stubbs L."/>
            <person name="Rokhsar D.S."/>
            <person name="Myers R.M."/>
            <person name="Rubin E.M."/>
            <person name="Lucas S.M."/>
        </authorList>
    </citation>
    <scope>NUCLEOTIDE SEQUENCE [LARGE SCALE GENOMIC DNA]</scope>
    <scope>VARIANTS ILE-90 AND CYS-188</scope>
</reference>
<reference key="7">
    <citation type="submission" date="2005-07" db="EMBL/GenBank/DDBJ databases">
        <authorList>
            <person name="Mural R.J."/>
            <person name="Istrail S."/>
            <person name="Sutton G.G."/>
            <person name="Florea L."/>
            <person name="Halpern A.L."/>
            <person name="Mobarry C.M."/>
            <person name="Lippert R."/>
            <person name="Walenz B."/>
            <person name="Shatkay H."/>
            <person name="Dew I."/>
            <person name="Miller J.R."/>
            <person name="Flanigan M.J."/>
            <person name="Edwards N.J."/>
            <person name="Bolanos R."/>
            <person name="Fasulo D."/>
            <person name="Halldorsson B.V."/>
            <person name="Hannenhalli S."/>
            <person name="Turner R."/>
            <person name="Yooseph S."/>
            <person name="Lu F."/>
            <person name="Nusskern D.R."/>
            <person name="Shue B.C."/>
            <person name="Zheng X.H."/>
            <person name="Zhong F."/>
            <person name="Delcher A.L."/>
            <person name="Huson D.H."/>
            <person name="Kravitz S.A."/>
            <person name="Mouchard L."/>
            <person name="Reinert K."/>
            <person name="Remington K.A."/>
            <person name="Clark A.G."/>
            <person name="Waterman M.S."/>
            <person name="Eichler E.E."/>
            <person name="Adams M.D."/>
            <person name="Hunkapiller M.W."/>
            <person name="Myers E.W."/>
            <person name="Venter J.C."/>
        </authorList>
    </citation>
    <scope>NUCLEOTIDE SEQUENCE [LARGE SCALE GENOMIC DNA]</scope>
    <scope>VARIANTS MET-16; ASP-76 AND GLY-522</scope>
</reference>
<reference key="8">
    <citation type="journal article" date="2005" name="Arch. Biochem. Biophys.">
        <title>Oxygenation of polyunsaturated long chain fatty acids by recombinant CYP4F8 and CYP4F12 and catalytic importance of Tyr-125 and Gly-328 of CYP4F8.</title>
        <authorList>
            <person name="Stark K."/>
            <person name="Wongsud B."/>
            <person name="Burman R."/>
            <person name="Oliw E.H."/>
        </authorList>
    </citation>
    <scope>FUNCTION</scope>
    <scope>CATALYTIC ACTIVITY</scope>
</reference>
<name>CP4FC_HUMAN</name>
<feature type="chain" id="PRO_0000051857" description="Cytochrome P450 4F12">
    <location>
        <begin position="1"/>
        <end position="524"/>
    </location>
</feature>
<feature type="transmembrane region" description="Helical" evidence="4">
    <location>
        <begin position="19"/>
        <end position="39"/>
    </location>
</feature>
<feature type="transmembrane region" description="Helical" evidence="4">
    <location>
        <begin position="87"/>
        <end position="107"/>
    </location>
</feature>
<feature type="binding site" description="axial binding residue" evidence="1">
    <location>
        <position position="468"/>
    </location>
    <ligand>
        <name>heme</name>
        <dbReference type="ChEBI" id="CHEBI:30413"/>
    </ligand>
    <ligandPart>
        <name>Fe</name>
        <dbReference type="ChEBI" id="CHEBI:18248"/>
    </ligandPart>
</feature>
<feature type="splice variant" id="VSP_055581" description="In isoform 2." evidence="15 16">
    <original>VWLGPIIPFIVLC</original>
    <variation>LPLHPRIISSSGS</variation>
    <location>
        <begin position="90"/>
        <end position="102"/>
    </location>
</feature>
<feature type="splice variant" id="VSP_055582" description="In isoform 2." evidence="15 16">
    <location>
        <begin position="103"/>
        <end position="524"/>
    </location>
</feature>
<feature type="sequence variant" id="VAR_013244" description="In dbSNP:rs16995376." evidence="6">
    <original>P</original>
    <variation>L</variation>
    <location>
        <position position="13"/>
    </location>
</feature>
<feature type="sequence variant" id="VAR_048459" description="In dbSNP:rs16995378." evidence="5 6 7 10 11 12">
    <original>T</original>
    <variation>M</variation>
    <location>
        <position position="16"/>
    </location>
</feature>
<feature type="sequence variant" id="VAR_013245" description="In dbSNP:rs609636." evidence="5 6 7 10 11 12">
    <original>N</original>
    <variation>D</variation>
    <location>
        <position position="76"/>
    </location>
</feature>
<feature type="sequence variant" id="VAR_013246" description="In dbSNP:rs609290." evidence="8">
    <original>V</original>
    <variation>I</variation>
    <location>
        <position position="90"/>
    </location>
</feature>
<feature type="sequence variant" id="VAR_013247" description="In dbSNP:rs2285888." evidence="8">
    <original>R</original>
    <variation>C</variation>
    <location>
        <position position="188"/>
    </location>
</feature>
<feature type="sequence variant" id="VAR_048460" description="In dbSNP:rs593818." evidence="5 6 7 12">
    <original>S</original>
    <variation>G</variation>
    <location>
        <position position="522"/>
    </location>
</feature>
<comment type="function">
    <text evidence="5 6 9">A cytochrome P450 monooxygenase involved in the metabolism of endogenous polyunsaturated fatty acids (PUFAs). Mechanistically, uses molecular oxygen inserting one oxygen atom into a substrate, and reducing the second into a water molecule, with two electrons provided by NADPH via cytochrome P450 reductase (CPR; NADPH-ferrihemoprotein reductase). Catalyzes the hydroxylation of carbon hydrogen bonds, with preference for omega-2 position. Metabolizes (5Z,8Z,11Z,14Z)-eicosatetraenoic acid (arachidonate) toward 18-hydroxy arachidonate (PubMed:11162607). Catalyzes the epoxidation of double bonds of PUFAs such as docosapentaenoic and docosahexaenoic acids (PubMed:16112640). Has low omega-hydroxylase activity toward leukotriene B4 and arachidonate (PubMed:11162645). Involved in the metabolism of xenobiotics. Catalyzes the hydroxylation of the antihistamine drug ebastine (PubMed:11162645).</text>
</comment>
<comment type="catalytic activity">
    <reaction evidence="5">
        <text>an organic molecule + reduced [NADPH--hemoprotein reductase] + O2 = an alcohol + oxidized [NADPH--hemoprotein reductase] + H2O + H(+)</text>
        <dbReference type="Rhea" id="RHEA:17149"/>
        <dbReference type="Rhea" id="RHEA-COMP:11964"/>
        <dbReference type="Rhea" id="RHEA-COMP:11965"/>
        <dbReference type="ChEBI" id="CHEBI:15377"/>
        <dbReference type="ChEBI" id="CHEBI:15378"/>
        <dbReference type="ChEBI" id="CHEBI:15379"/>
        <dbReference type="ChEBI" id="CHEBI:30879"/>
        <dbReference type="ChEBI" id="CHEBI:57618"/>
        <dbReference type="ChEBI" id="CHEBI:58210"/>
        <dbReference type="ChEBI" id="CHEBI:142491"/>
        <dbReference type="EC" id="1.14.14.1"/>
    </reaction>
    <physiologicalReaction direction="left-to-right" evidence="18">
        <dbReference type="Rhea" id="RHEA:17150"/>
    </physiologicalReaction>
</comment>
<comment type="catalytic activity">
    <reaction evidence="5">
        <text>(5Z,8Z,11Z,14Z)-eicosatetraenoate + reduced [NADPH--hemoprotein reductase] + O2 = 18-hydroxy-(5Z,8Z,11Z,14Z)-eicosatetraenoate + oxidized [NADPH--hemoprotein reductase] + H2O + H(+)</text>
        <dbReference type="Rhea" id="RHEA:39811"/>
        <dbReference type="Rhea" id="RHEA-COMP:11964"/>
        <dbReference type="Rhea" id="RHEA-COMP:11965"/>
        <dbReference type="ChEBI" id="CHEBI:15377"/>
        <dbReference type="ChEBI" id="CHEBI:15378"/>
        <dbReference type="ChEBI" id="CHEBI:15379"/>
        <dbReference type="ChEBI" id="CHEBI:32395"/>
        <dbReference type="ChEBI" id="CHEBI:57618"/>
        <dbReference type="ChEBI" id="CHEBI:58210"/>
        <dbReference type="ChEBI" id="CHEBI:63590"/>
    </reaction>
    <physiologicalReaction direction="left-to-right" evidence="18">
        <dbReference type="Rhea" id="RHEA:39812"/>
    </physiologicalReaction>
</comment>
<comment type="catalytic activity">
    <reaction evidence="9">
        <text>(7Z,10Z,13Z,16Z,19Z)-docosapentaenoate + reduced [NADPH--hemoprotein reductase] + O2 = 10,11-epoxy-(7Z,13Z,16Z,19Z)-docosatetraenoate + oxidized [NADPH--hemoprotein reductase] + H2O + H(+)</text>
        <dbReference type="Rhea" id="RHEA:51108"/>
        <dbReference type="Rhea" id="RHEA-COMP:11964"/>
        <dbReference type="Rhea" id="RHEA-COMP:11965"/>
        <dbReference type="ChEBI" id="CHEBI:15377"/>
        <dbReference type="ChEBI" id="CHEBI:15378"/>
        <dbReference type="ChEBI" id="CHEBI:15379"/>
        <dbReference type="ChEBI" id="CHEBI:57618"/>
        <dbReference type="ChEBI" id="CHEBI:58210"/>
        <dbReference type="ChEBI" id="CHEBI:77224"/>
        <dbReference type="ChEBI" id="CHEBI:133938"/>
    </reaction>
    <physiologicalReaction direction="left-to-right" evidence="19">
        <dbReference type="Rhea" id="RHEA:51109"/>
    </physiologicalReaction>
</comment>
<comment type="catalytic activity">
    <reaction evidence="9">
        <text>(7Z,10Z,13Z,16Z,19Z)-docosapentaenoate + reduced [NADPH--hemoprotein reductase] + O2 = 13,14-epoxy-(7Z,10Z,16Z,19Z)-docosatetraenoate + oxidized [NADPH--hemoprotein reductase] + H2O + H(+)</text>
        <dbReference type="Rhea" id="RHEA:51104"/>
        <dbReference type="Rhea" id="RHEA-COMP:11964"/>
        <dbReference type="Rhea" id="RHEA-COMP:11965"/>
        <dbReference type="ChEBI" id="CHEBI:15377"/>
        <dbReference type="ChEBI" id="CHEBI:15378"/>
        <dbReference type="ChEBI" id="CHEBI:15379"/>
        <dbReference type="ChEBI" id="CHEBI:57618"/>
        <dbReference type="ChEBI" id="CHEBI:58210"/>
        <dbReference type="ChEBI" id="CHEBI:77224"/>
        <dbReference type="ChEBI" id="CHEBI:133937"/>
    </reaction>
    <physiologicalReaction direction="left-to-right" evidence="19">
        <dbReference type="Rhea" id="RHEA:51105"/>
    </physiologicalReaction>
</comment>
<comment type="catalytic activity">
    <reaction evidence="9">
        <text>(7Z,10Z,13Z,16Z,19Z)-docosapentaenoate + reduced [NADPH--hemoprotein reductase] + O2 = 16,17-epoxy-(7Z,10Z,13Z,19Z)-docosatetraenoate + oxidized [NADPH--hemoprotein reductase] + H2O + H(+)</text>
        <dbReference type="Rhea" id="RHEA:51100"/>
        <dbReference type="Rhea" id="RHEA-COMP:11964"/>
        <dbReference type="Rhea" id="RHEA-COMP:11965"/>
        <dbReference type="ChEBI" id="CHEBI:15377"/>
        <dbReference type="ChEBI" id="CHEBI:15378"/>
        <dbReference type="ChEBI" id="CHEBI:15379"/>
        <dbReference type="ChEBI" id="CHEBI:57618"/>
        <dbReference type="ChEBI" id="CHEBI:58210"/>
        <dbReference type="ChEBI" id="CHEBI:77224"/>
        <dbReference type="ChEBI" id="CHEBI:133936"/>
    </reaction>
    <physiologicalReaction direction="left-to-right" evidence="19">
        <dbReference type="Rhea" id="RHEA:51101"/>
    </physiologicalReaction>
</comment>
<comment type="catalytic activity">
    <reaction evidence="9">
        <text>(7Z,10Z,13Z,16Z,19Z)-docosapentaenoate + reduced [NADPH--hemoprotein reductase] + O2 = 19,20-epoxy-(7Z,10Z,13Z,16Z)-docosatetraenoate + oxidized [NADPH--hemoprotein reductase] + H2O + H(+)</text>
        <dbReference type="Rhea" id="RHEA:51096"/>
        <dbReference type="Rhea" id="RHEA-COMP:11964"/>
        <dbReference type="Rhea" id="RHEA-COMP:11965"/>
        <dbReference type="ChEBI" id="CHEBI:15377"/>
        <dbReference type="ChEBI" id="CHEBI:15378"/>
        <dbReference type="ChEBI" id="CHEBI:15379"/>
        <dbReference type="ChEBI" id="CHEBI:57618"/>
        <dbReference type="ChEBI" id="CHEBI:58210"/>
        <dbReference type="ChEBI" id="CHEBI:77224"/>
        <dbReference type="ChEBI" id="CHEBI:133935"/>
    </reaction>
    <physiologicalReaction direction="left-to-right" evidence="19">
        <dbReference type="Rhea" id="RHEA:51097"/>
    </physiologicalReaction>
</comment>
<comment type="catalytic activity">
    <reaction evidence="9">
        <text>(4Z,7Z,10Z,13Z,16Z,19Z)-docosahexaenoate + reduced [NADPH--hemoprotein reductase] + O2 = 10,11-epoxy-(4Z,7Z,13Z,16Z,19Z)-docosapentaenoate + oxidized [NADPH--hemoprotein reductase] + H2O + H(+)</text>
        <dbReference type="Rhea" id="RHEA:51092"/>
        <dbReference type="Rhea" id="RHEA-COMP:11964"/>
        <dbReference type="Rhea" id="RHEA-COMP:11965"/>
        <dbReference type="ChEBI" id="CHEBI:15377"/>
        <dbReference type="ChEBI" id="CHEBI:15378"/>
        <dbReference type="ChEBI" id="CHEBI:15379"/>
        <dbReference type="ChEBI" id="CHEBI:57618"/>
        <dbReference type="ChEBI" id="CHEBI:58210"/>
        <dbReference type="ChEBI" id="CHEBI:77016"/>
        <dbReference type="ChEBI" id="CHEBI:133934"/>
    </reaction>
    <physiologicalReaction direction="left-to-right" evidence="19">
        <dbReference type="Rhea" id="RHEA:51093"/>
    </physiologicalReaction>
</comment>
<comment type="catalytic activity">
    <reaction evidence="9">
        <text>(4Z,7Z,10Z,13Z,16Z,19Z)-docosahexaenoate + reduced [NADPH--hemoprotein reductase] + O2 = 13,14-epoxy-(4Z,7Z,10Z,16Z,19Z)-docosapentaenoate + oxidized [NADPH--hemoprotein reductase] + H2O + H(+)</text>
        <dbReference type="Rhea" id="RHEA:51088"/>
        <dbReference type="Rhea" id="RHEA-COMP:11964"/>
        <dbReference type="Rhea" id="RHEA-COMP:11965"/>
        <dbReference type="ChEBI" id="CHEBI:15377"/>
        <dbReference type="ChEBI" id="CHEBI:15378"/>
        <dbReference type="ChEBI" id="CHEBI:15379"/>
        <dbReference type="ChEBI" id="CHEBI:57618"/>
        <dbReference type="ChEBI" id="CHEBI:58210"/>
        <dbReference type="ChEBI" id="CHEBI:77016"/>
        <dbReference type="ChEBI" id="CHEBI:133933"/>
    </reaction>
    <physiologicalReaction direction="left-to-right" evidence="19">
        <dbReference type="Rhea" id="RHEA:51089"/>
    </physiologicalReaction>
</comment>
<comment type="catalytic activity">
    <reaction evidence="9">
        <text>(4Z,7Z,10Z,13Z,16Z,19Z)-docosahexaenoate + reduced [NADPH--hemoprotein reductase] + O2 = 16,17-epoxy-(4Z,7Z,10Z,13Z,19Z)-docosapentaenoate + oxidized [NADPH--hemoprotein reductase] + H2O + H(+)</text>
        <dbReference type="Rhea" id="RHEA:51084"/>
        <dbReference type="Rhea" id="RHEA-COMP:11964"/>
        <dbReference type="Rhea" id="RHEA-COMP:11965"/>
        <dbReference type="ChEBI" id="CHEBI:15377"/>
        <dbReference type="ChEBI" id="CHEBI:15378"/>
        <dbReference type="ChEBI" id="CHEBI:15379"/>
        <dbReference type="ChEBI" id="CHEBI:57618"/>
        <dbReference type="ChEBI" id="CHEBI:58210"/>
        <dbReference type="ChEBI" id="CHEBI:77016"/>
        <dbReference type="ChEBI" id="CHEBI:133932"/>
    </reaction>
    <physiologicalReaction direction="left-to-right" evidence="19">
        <dbReference type="Rhea" id="RHEA:51085"/>
    </physiologicalReaction>
</comment>
<comment type="catalytic activity">
    <reaction evidence="9">
        <text>(4Z,7Z,10Z,13Z,16Z,19Z)-docosahexaenoate + reduced [NADPH--hemoprotein reductase] + O2 = 19,20-epoxy-(4Z,7Z,10Z,13Z,16Z)-docosapentaenoate + oxidized [NADPH--hemoprotein reductase] + H2O + H(+)</text>
        <dbReference type="Rhea" id="RHEA:51080"/>
        <dbReference type="Rhea" id="RHEA-COMP:11964"/>
        <dbReference type="Rhea" id="RHEA-COMP:11965"/>
        <dbReference type="ChEBI" id="CHEBI:15377"/>
        <dbReference type="ChEBI" id="CHEBI:15378"/>
        <dbReference type="ChEBI" id="CHEBI:15379"/>
        <dbReference type="ChEBI" id="CHEBI:57618"/>
        <dbReference type="ChEBI" id="CHEBI:58210"/>
        <dbReference type="ChEBI" id="CHEBI:77016"/>
        <dbReference type="ChEBI" id="CHEBI:133931"/>
    </reaction>
    <physiologicalReaction direction="left-to-right" evidence="19">
        <dbReference type="Rhea" id="RHEA:51081"/>
    </physiologicalReaction>
</comment>
<comment type="cofactor">
    <cofactor evidence="2">
        <name>heme</name>
        <dbReference type="ChEBI" id="CHEBI:30413"/>
    </cofactor>
</comment>
<comment type="pathway">
    <text evidence="5">Lipid metabolism; arachidonate metabolism.</text>
</comment>
<comment type="interaction">
    <interactant intactId="EBI-3918831">
        <id>Q9HCS2</id>
    </interactant>
    <interactant intactId="EBI-16439278">
        <id>Q6FHY5</id>
        <label>MEOX2</label>
    </interactant>
    <organismsDiffer>false</organismsDiffer>
    <experiments>3</experiments>
</comment>
<comment type="interaction">
    <interactant intactId="EBI-3918831">
        <id>Q9HCS2</id>
    </interactant>
    <interactant intactId="EBI-713847">
        <id>P56282</id>
        <label>POLE2</label>
    </interactant>
    <organismsDiffer>false</organismsDiffer>
    <experiments>2</experiments>
</comment>
<comment type="interaction">
    <interactant intactId="EBI-3918831">
        <id>Q9HCS2</id>
    </interactant>
    <interactant intactId="EBI-6268651">
        <id>Q9NPL8</id>
        <label>TIMMDC1</label>
    </interactant>
    <organismsDiffer>false</organismsDiffer>
    <experiments>3</experiments>
</comment>
<comment type="subcellular location">
    <subcellularLocation>
        <location evidence="3">Endoplasmic reticulum membrane</location>
    </subcellularLocation>
    <subcellularLocation>
        <location evidence="3">Microsome membrane</location>
    </subcellularLocation>
</comment>
<comment type="alternative products">
    <event type="alternative splicing"/>
    <isoform>
        <id>Q9HCS2-1</id>
        <name>1</name>
        <sequence type="displayed"/>
    </isoform>
    <isoform>
        <id>Q9HCS2-2</id>
        <name>2</name>
        <sequence type="described" ref="VSP_055581 VSP_055582"/>
    </isoform>
</comment>
<comment type="tissue specificity">
    <text evidence="5 6">Expressed in small intestine, liver, colon and heart.</text>
</comment>
<comment type="similarity">
    <text evidence="17">Belongs to the cytochrome P450 family.</text>
</comment>
<comment type="sequence caution" evidence="17">
    <conflict type="erroneous initiation">
        <sequence resource="EMBL-CDS" id="EAW84492"/>
    </conflict>
    <text>Extended N-terminus.</text>
</comment>
<proteinExistence type="evidence at protein level"/>
<sequence>MSLLSLPWLGLRPVATSPWLLLLLVVGSWLLARILAWTYAFYNNCRRLQCFPQPPKRNWFWGHLGLITPTEEGLKNSTQMSATYSQGFTVWLGPIIPFIVLCHPDTIRSITNASAAIAPKDNLFIRFLKPWLGEGILLSGGDKWSRHRRMLTPAFHFNILKSYITIFNKSANIMLDKWQHLASEGSSRLDMFEHISLMTLDSLQKCIFSFDSHCQERPSEYIATILELSALVEKRSQHILQHMDFLYYLSHDGRRFHRACRLVHDFTDAVIRERRRTLPTQGIDDFFKDKAKSKTLDFIDVLLLSKDEDGKALSDEDIRAEADTFMFGGHDTTASGLSWVLYNLARHPEYQERCRQEVQELLKDRDPKEIEWDDLAQLPFLTMCVKESLRLHPPAPFISRCCTQDIVLPDGRVIPKGITCLIDIIGVHHNPTVWPDPEVYDPFRFDPENSKGRSPLAFIPFSAGPRNCIGQAFAMAEMKVVLALMLLHFRFLPDHTEPRRKLELIMRAEGGLWLRVEPLNVSLQ</sequence>
<organism>
    <name type="scientific">Homo sapiens</name>
    <name type="common">Human</name>
    <dbReference type="NCBI Taxonomy" id="9606"/>
    <lineage>
        <taxon>Eukaryota</taxon>
        <taxon>Metazoa</taxon>
        <taxon>Chordata</taxon>
        <taxon>Craniata</taxon>
        <taxon>Vertebrata</taxon>
        <taxon>Euteleostomi</taxon>
        <taxon>Mammalia</taxon>
        <taxon>Eutheria</taxon>
        <taxon>Euarchontoglires</taxon>
        <taxon>Primates</taxon>
        <taxon>Haplorrhini</taxon>
        <taxon>Catarrhini</taxon>
        <taxon>Hominidae</taxon>
        <taxon>Homo</taxon>
    </lineage>
</organism>
<protein>
    <recommendedName>
        <fullName evidence="13">Cytochrome P450 4F12</fullName>
        <ecNumber evidence="5 9">1.14.14.1</ecNumber>
    </recommendedName>
    <alternativeName>
        <fullName>CYPIVF12</fullName>
    </alternativeName>
</protein>
<evidence type="ECO:0000250" key="1">
    <source>
        <dbReference type="UniProtKB" id="P51869"/>
    </source>
</evidence>
<evidence type="ECO:0000250" key="2">
    <source>
        <dbReference type="UniProtKB" id="Q02928"/>
    </source>
</evidence>
<evidence type="ECO:0000250" key="3">
    <source>
        <dbReference type="UniProtKB" id="Q9HBI6"/>
    </source>
</evidence>
<evidence type="ECO:0000255" key="4"/>
<evidence type="ECO:0000269" key="5">
    <source>
    </source>
</evidence>
<evidence type="ECO:0000269" key="6">
    <source>
    </source>
</evidence>
<evidence type="ECO:0000269" key="7">
    <source>
    </source>
</evidence>
<evidence type="ECO:0000269" key="8">
    <source>
    </source>
</evidence>
<evidence type="ECO:0000269" key="9">
    <source>
    </source>
</evidence>
<evidence type="ECO:0000269" key="10">
    <source>
    </source>
</evidence>
<evidence type="ECO:0000269" key="11">
    <source>
    </source>
</evidence>
<evidence type="ECO:0000269" key="12">
    <source ref="7"/>
</evidence>
<evidence type="ECO:0000303" key="13">
    <source>
    </source>
</evidence>
<evidence type="ECO:0000303" key="14">
    <source>
    </source>
</evidence>
<evidence type="ECO:0000303" key="15">
    <source>
    </source>
</evidence>
<evidence type="ECO:0000303" key="16">
    <source>
    </source>
</evidence>
<evidence type="ECO:0000305" key="17"/>
<evidence type="ECO:0000305" key="18">
    <source>
    </source>
</evidence>
<evidence type="ECO:0000305" key="19">
    <source>
    </source>
</evidence>
<evidence type="ECO:0000312" key="20">
    <source>
        <dbReference type="HGNC" id="HGNC:18857"/>
    </source>
</evidence>
<dbReference type="EC" id="1.14.14.1" evidence="5 9"/>
<dbReference type="EMBL" id="AY008841">
    <property type="protein sequence ID" value="AAG33247.1"/>
    <property type="molecule type" value="mRNA"/>
</dbReference>
<dbReference type="EMBL" id="AB035130">
    <property type="protein sequence ID" value="BAB18269.1"/>
    <property type="molecule type" value="mRNA"/>
</dbReference>
<dbReference type="EMBL" id="AB035131">
    <property type="protein sequence ID" value="BAB18270.1"/>
    <property type="molecule type" value="mRNA"/>
</dbReference>
<dbReference type="EMBL" id="AY358977">
    <property type="protein sequence ID" value="AAQ89336.1"/>
    <property type="molecule type" value="mRNA"/>
</dbReference>
<dbReference type="EMBL" id="AK075435">
    <property type="protein sequence ID" value="BAG52137.1"/>
    <property type="molecule type" value="mRNA"/>
</dbReference>
<dbReference type="EMBL" id="AL832171">
    <property type="protein sequence ID" value="CAI46131.1"/>
    <property type="molecule type" value="mRNA"/>
</dbReference>
<dbReference type="EMBL" id="AC004523">
    <property type="protein sequence ID" value="AAC11543.1"/>
    <property type="molecule type" value="Genomic_DNA"/>
</dbReference>
<dbReference type="EMBL" id="KF459712">
    <property type="status" value="NOT_ANNOTATED_CDS"/>
    <property type="molecule type" value="Genomic_DNA"/>
</dbReference>
<dbReference type="EMBL" id="AC122702">
    <property type="status" value="NOT_ANNOTATED_CDS"/>
    <property type="molecule type" value="Genomic_DNA"/>
</dbReference>
<dbReference type="EMBL" id="CH471106">
    <property type="protein sequence ID" value="EAW84492.1"/>
    <property type="status" value="ALT_INIT"/>
    <property type="molecule type" value="Genomic_DNA"/>
</dbReference>
<dbReference type="EMBL" id="CH471106">
    <property type="protein sequence ID" value="EAW84495.1"/>
    <property type="molecule type" value="Genomic_DNA"/>
</dbReference>
<dbReference type="CCDS" id="CCDS42517.1">
    <molecule id="Q9HCS2-1"/>
</dbReference>
<dbReference type="PIR" id="JC7594">
    <property type="entry name" value="JC7594"/>
</dbReference>
<dbReference type="PIR" id="JC7598">
    <property type="entry name" value="JC7598"/>
</dbReference>
<dbReference type="RefSeq" id="NP_076433.3">
    <molecule id="Q9HCS2-1"/>
    <property type="nucleotide sequence ID" value="NM_023944.4"/>
</dbReference>
<dbReference type="SMR" id="Q9HCS2"/>
<dbReference type="BioGRID" id="122449">
    <property type="interactions" value="31"/>
</dbReference>
<dbReference type="FunCoup" id="Q9HCS2">
    <property type="interactions" value="162"/>
</dbReference>
<dbReference type="IntAct" id="Q9HCS2">
    <property type="interactions" value="11"/>
</dbReference>
<dbReference type="MINT" id="Q9HCS2"/>
<dbReference type="STRING" id="9606.ENSP00000448998"/>
<dbReference type="BindingDB" id="Q9HCS2"/>
<dbReference type="ChEMBL" id="CHEMBL3509589"/>
<dbReference type="DrugBank" id="DB01026">
    <property type="generic name" value="Ketoconazole"/>
</dbReference>
<dbReference type="DrugBank" id="DB12016">
    <property type="generic name" value="Ponesimod"/>
</dbReference>
<dbReference type="GuidetoPHARMACOLOGY" id="1348"/>
<dbReference type="SwissLipids" id="SLP:000001652"/>
<dbReference type="GlyGen" id="Q9HCS2">
    <property type="glycosylation" value="1 site, 1 O-linked glycan (1 site)"/>
</dbReference>
<dbReference type="iPTMnet" id="Q9HCS2"/>
<dbReference type="PhosphoSitePlus" id="Q9HCS2"/>
<dbReference type="SwissPalm" id="Q9HCS2"/>
<dbReference type="BioMuta" id="CYP4F12"/>
<dbReference type="DMDM" id="313104094"/>
<dbReference type="jPOST" id="Q9HCS2"/>
<dbReference type="MassIVE" id="Q9HCS2"/>
<dbReference type="PaxDb" id="9606-ENSP00000448998"/>
<dbReference type="PeptideAtlas" id="Q9HCS2"/>
<dbReference type="ProteomicsDB" id="18127"/>
<dbReference type="ProteomicsDB" id="81793">
    <molecule id="Q9HCS2-1"/>
</dbReference>
<dbReference type="Pumba" id="Q9HCS2"/>
<dbReference type="Antibodypedia" id="27141">
    <property type="antibodies" value="140 antibodies from 24 providers"/>
</dbReference>
<dbReference type="DNASU" id="66002"/>
<dbReference type="Ensembl" id="ENST00000324632.10">
    <molecule id="Q9HCS2-1"/>
    <property type="protein sequence ID" value="ENSP00000321821.9"/>
    <property type="gene ID" value="ENSG00000186204.15"/>
</dbReference>
<dbReference type="Ensembl" id="ENST00000517734.5">
    <molecule id="Q9HCS2-2"/>
    <property type="protein sequence ID" value="ENSP00000430849.1"/>
    <property type="gene ID" value="ENSG00000186204.15"/>
</dbReference>
<dbReference type="Ensembl" id="ENST00000548435.5">
    <molecule id="Q9HCS2-2"/>
    <property type="protein sequence ID" value="ENSP00000449703.1"/>
    <property type="gene ID" value="ENSG00000186204.15"/>
</dbReference>
<dbReference type="Ensembl" id="ENST00000550308.6">
    <molecule id="Q9HCS2-1"/>
    <property type="protein sequence ID" value="ENSP00000448998.1"/>
    <property type="gene ID" value="ENSG00000186204.15"/>
</dbReference>
<dbReference type="GeneID" id="66002"/>
<dbReference type="KEGG" id="hsa:66002"/>
<dbReference type="MANE-Select" id="ENST00000550308.6">
    <property type="protein sequence ID" value="ENSP00000448998.1"/>
    <property type="RefSeq nucleotide sequence ID" value="NM_023944.4"/>
    <property type="RefSeq protein sequence ID" value="NP_076433.3"/>
</dbReference>
<dbReference type="UCSC" id="uc060uvi.1">
    <molecule id="Q9HCS2-1"/>
    <property type="organism name" value="human"/>
</dbReference>
<dbReference type="AGR" id="HGNC:18857"/>
<dbReference type="CTD" id="66002"/>
<dbReference type="DisGeNET" id="66002"/>
<dbReference type="GeneCards" id="CYP4F12"/>
<dbReference type="HGNC" id="HGNC:18857">
    <property type="gene designation" value="CYP4F12"/>
</dbReference>
<dbReference type="HPA" id="ENSG00000186204">
    <property type="expression patterns" value="Tissue enhanced (intestine, liver)"/>
</dbReference>
<dbReference type="MIM" id="611485">
    <property type="type" value="gene"/>
</dbReference>
<dbReference type="neXtProt" id="NX_Q9HCS2"/>
<dbReference type="OpenTargets" id="ENSG00000186204"/>
<dbReference type="PharmGKB" id="PA38717"/>
<dbReference type="VEuPathDB" id="HostDB:ENSG00000186204"/>
<dbReference type="eggNOG" id="KOG0157">
    <property type="taxonomic scope" value="Eukaryota"/>
</dbReference>
<dbReference type="GeneTree" id="ENSGT00940000163718"/>
<dbReference type="InParanoid" id="Q9HCS2"/>
<dbReference type="OMA" id="SWRLDRE"/>
<dbReference type="OrthoDB" id="1470350at2759"/>
<dbReference type="PAN-GO" id="Q9HCS2">
    <property type="GO annotations" value="7 GO annotations based on evolutionary models"/>
</dbReference>
<dbReference type="PhylomeDB" id="Q9HCS2"/>
<dbReference type="TreeFam" id="TF105088"/>
<dbReference type="BRENDA" id="1.14.14.B9">
    <property type="organism ID" value="2681"/>
</dbReference>
<dbReference type="PathwayCommons" id="Q9HCS2"/>
<dbReference type="Reactome" id="R-HSA-211935">
    <property type="pathway name" value="Fatty acids"/>
</dbReference>
<dbReference type="Reactome" id="R-HSA-211979">
    <property type="pathway name" value="Eicosanoids"/>
</dbReference>
<dbReference type="SignaLink" id="Q9HCS2"/>
<dbReference type="UniPathway" id="UPA00383"/>
<dbReference type="BioGRID-ORCS" id="66002">
    <property type="hits" value="7 hits in 1145 CRISPR screens"/>
</dbReference>
<dbReference type="ChiTaRS" id="CYP4F12">
    <property type="organism name" value="human"/>
</dbReference>
<dbReference type="GeneWiki" id="CYP4F12"/>
<dbReference type="GenomeRNAi" id="66002"/>
<dbReference type="Pharos" id="Q9HCS2">
    <property type="development level" value="Tbio"/>
</dbReference>
<dbReference type="PRO" id="PR:Q9HCS2"/>
<dbReference type="Proteomes" id="UP000005640">
    <property type="component" value="Chromosome 19"/>
</dbReference>
<dbReference type="RNAct" id="Q9HCS2">
    <property type="molecule type" value="protein"/>
</dbReference>
<dbReference type="Bgee" id="ENSG00000186204">
    <property type="expression patterns" value="Expressed in mucosa of transverse colon and 182 other cell types or tissues"/>
</dbReference>
<dbReference type="ExpressionAtlas" id="Q9HCS2">
    <property type="expression patterns" value="baseline and differential"/>
</dbReference>
<dbReference type="GO" id="GO:0016324">
    <property type="term" value="C:apical plasma membrane"/>
    <property type="evidence" value="ECO:0000250"/>
    <property type="project" value="UniProtKB"/>
</dbReference>
<dbReference type="GO" id="GO:0005737">
    <property type="term" value="C:cytoplasm"/>
    <property type="evidence" value="ECO:0000250"/>
    <property type="project" value="UniProtKB"/>
</dbReference>
<dbReference type="GO" id="GO:0005789">
    <property type="term" value="C:endoplasmic reticulum membrane"/>
    <property type="evidence" value="ECO:0000304"/>
    <property type="project" value="Reactome"/>
</dbReference>
<dbReference type="GO" id="GO:0043231">
    <property type="term" value="C:intracellular membrane-bounded organelle"/>
    <property type="evidence" value="ECO:0000250"/>
    <property type="project" value="UniProtKB"/>
</dbReference>
<dbReference type="GO" id="GO:0018685">
    <property type="term" value="F:alkane 1-monooxygenase activity"/>
    <property type="evidence" value="ECO:0000250"/>
    <property type="project" value="UniProtKB"/>
</dbReference>
<dbReference type="GO" id="GO:0008392">
    <property type="term" value="F:arachidonate epoxygenase activity"/>
    <property type="evidence" value="ECO:0000250"/>
    <property type="project" value="UniProtKB"/>
</dbReference>
<dbReference type="GO" id="GO:0020037">
    <property type="term" value="F:heme binding"/>
    <property type="evidence" value="ECO:0007669"/>
    <property type="project" value="InterPro"/>
</dbReference>
<dbReference type="GO" id="GO:0005506">
    <property type="term" value="F:iron ion binding"/>
    <property type="evidence" value="ECO:0007669"/>
    <property type="project" value="InterPro"/>
</dbReference>
<dbReference type="GO" id="GO:0050051">
    <property type="term" value="F:leukotriene-B4 20-monooxygenase activity"/>
    <property type="evidence" value="ECO:0000250"/>
    <property type="project" value="UniProtKB"/>
</dbReference>
<dbReference type="GO" id="GO:0004497">
    <property type="term" value="F:monooxygenase activity"/>
    <property type="evidence" value="ECO:0000304"/>
    <property type="project" value="Reactome"/>
</dbReference>
<dbReference type="GO" id="GO:0019369">
    <property type="term" value="P:arachidonate metabolic process"/>
    <property type="evidence" value="ECO:0000250"/>
    <property type="project" value="UniProtKB"/>
</dbReference>
<dbReference type="GO" id="GO:0019373">
    <property type="term" value="P:epoxygenase P450 pathway"/>
    <property type="evidence" value="ECO:0000250"/>
    <property type="project" value="UniProtKB"/>
</dbReference>
<dbReference type="GO" id="GO:0006631">
    <property type="term" value="P:fatty acid metabolic process"/>
    <property type="evidence" value="ECO:0000304"/>
    <property type="project" value="Reactome"/>
</dbReference>
<dbReference type="GO" id="GO:0036101">
    <property type="term" value="P:leukotriene B4 catabolic process"/>
    <property type="evidence" value="ECO:0000250"/>
    <property type="project" value="UniProtKB"/>
</dbReference>
<dbReference type="GO" id="GO:0001676">
    <property type="term" value="P:long-chain fatty acid metabolic process"/>
    <property type="evidence" value="ECO:0000250"/>
    <property type="project" value="UniProtKB"/>
</dbReference>
<dbReference type="GO" id="GO:0042361">
    <property type="term" value="P:menaquinone catabolic process"/>
    <property type="evidence" value="ECO:0000318"/>
    <property type="project" value="GO_Central"/>
</dbReference>
<dbReference type="GO" id="GO:0042376">
    <property type="term" value="P:phylloquinone catabolic process"/>
    <property type="evidence" value="ECO:0000318"/>
    <property type="project" value="GO_Central"/>
</dbReference>
<dbReference type="GO" id="GO:0003095">
    <property type="term" value="P:pressure natriuresis"/>
    <property type="evidence" value="ECO:0000250"/>
    <property type="project" value="UniProtKB"/>
</dbReference>
<dbReference type="GO" id="GO:0003091">
    <property type="term" value="P:renal water homeostasis"/>
    <property type="evidence" value="ECO:0000250"/>
    <property type="project" value="UniProtKB"/>
</dbReference>
<dbReference type="GO" id="GO:0055078">
    <property type="term" value="P:sodium ion homeostasis"/>
    <property type="evidence" value="ECO:0000250"/>
    <property type="project" value="UniProtKB"/>
</dbReference>
<dbReference type="GO" id="GO:0000038">
    <property type="term" value="P:very long-chain fatty acid metabolic process"/>
    <property type="evidence" value="ECO:0000250"/>
    <property type="project" value="UniProtKB"/>
</dbReference>
<dbReference type="GO" id="GO:0042360">
    <property type="term" value="P:vitamin E metabolic process"/>
    <property type="evidence" value="ECO:0000250"/>
    <property type="project" value="UniProtKB"/>
</dbReference>
<dbReference type="GO" id="GO:0006805">
    <property type="term" value="P:xenobiotic metabolic process"/>
    <property type="evidence" value="ECO:0000250"/>
    <property type="project" value="UniProtKB"/>
</dbReference>
<dbReference type="CDD" id="cd20679">
    <property type="entry name" value="CYP4F"/>
    <property type="match status" value="1"/>
</dbReference>
<dbReference type="FunFam" id="1.10.630.10:FF:000005">
    <property type="entry name" value="cytochrome P450 4F22 isoform X2"/>
    <property type="match status" value="1"/>
</dbReference>
<dbReference type="Gene3D" id="1.10.630.10">
    <property type="entry name" value="Cytochrome P450"/>
    <property type="match status" value="1"/>
</dbReference>
<dbReference type="InterPro" id="IPR001128">
    <property type="entry name" value="Cyt_P450"/>
</dbReference>
<dbReference type="InterPro" id="IPR017972">
    <property type="entry name" value="Cyt_P450_CS"/>
</dbReference>
<dbReference type="InterPro" id="IPR002401">
    <property type="entry name" value="Cyt_P450_E_grp-I"/>
</dbReference>
<dbReference type="InterPro" id="IPR036396">
    <property type="entry name" value="Cyt_P450_sf"/>
</dbReference>
<dbReference type="InterPro" id="IPR050196">
    <property type="entry name" value="Cytochrome_P450_Monoox"/>
</dbReference>
<dbReference type="PANTHER" id="PTHR24291:SF27">
    <property type="entry name" value="CYTOCHROME P450 4F12"/>
    <property type="match status" value="1"/>
</dbReference>
<dbReference type="PANTHER" id="PTHR24291">
    <property type="entry name" value="CYTOCHROME P450 FAMILY 4"/>
    <property type="match status" value="1"/>
</dbReference>
<dbReference type="Pfam" id="PF00067">
    <property type="entry name" value="p450"/>
    <property type="match status" value="1"/>
</dbReference>
<dbReference type="PRINTS" id="PR00463">
    <property type="entry name" value="EP450I"/>
</dbReference>
<dbReference type="PRINTS" id="PR00385">
    <property type="entry name" value="P450"/>
</dbReference>
<dbReference type="SUPFAM" id="SSF48264">
    <property type="entry name" value="Cytochrome P450"/>
    <property type="match status" value="1"/>
</dbReference>
<dbReference type="PROSITE" id="PS00086">
    <property type="entry name" value="CYTOCHROME_P450"/>
    <property type="match status" value="1"/>
</dbReference>